<comment type="function">
    <text>Core component of nucleosome. Nucleosomes wrap and compact DNA into chromatin, limiting DNA accessibility to the cellular machineries which require DNA as a template. Histones thereby play a central role in transcription regulation, DNA repair, DNA replication and chromosomal stability. DNA accessibility is regulated via a complex set of post-translational modifications of histones, also called histone code, and nucleosome remodeling.</text>
</comment>
<comment type="subunit">
    <text>The nucleosome is a histone octamer containing two molecules each of H2A, H2B, H3 and H4 assembled in one H3-H4 heterotetramer and two H2A-H2B heterodimers. The octamer wraps approximately 147 bp of DNA.</text>
</comment>
<comment type="subcellular location">
    <subcellularLocation>
        <location evidence="1">Nucleus</location>
    </subcellularLocation>
    <subcellularLocation>
        <location evidence="1">Chromosome</location>
    </subcellularLocation>
</comment>
<comment type="similarity">
    <text evidence="3">Belongs to the histone H3 family.</text>
</comment>
<evidence type="ECO:0000250" key="1"/>
<evidence type="ECO:0000256" key="2">
    <source>
        <dbReference type="SAM" id="MobiDB-lite"/>
    </source>
</evidence>
<evidence type="ECO:0000305" key="3"/>
<protein>
    <recommendedName>
        <fullName>Histone H3-4</fullName>
    </recommendedName>
</protein>
<gene>
    <name type="primary">H3-4</name>
</gene>
<accession>P81198</accession>
<proteinExistence type="inferred from homology"/>
<dbReference type="EMBL" id="Y16630">
    <property type="protein sequence ID" value="CAA76333.1"/>
    <property type="molecule type" value="Genomic_DNA"/>
</dbReference>
<dbReference type="SMR" id="P81198"/>
<dbReference type="GO" id="GO:0000786">
    <property type="term" value="C:nucleosome"/>
    <property type="evidence" value="ECO:0007669"/>
    <property type="project" value="UniProtKB-KW"/>
</dbReference>
<dbReference type="GO" id="GO:0005634">
    <property type="term" value="C:nucleus"/>
    <property type="evidence" value="ECO:0007669"/>
    <property type="project" value="UniProtKB-SubCell"/>
</dbReference>
<dbReference type="GO" id="GO:0003677">
    <property type="term" value="F:DNA binding"/>
    <property type="evidence" value="ECO:0007669"/>
    <property type="project" value="UniProtKB-KW"/>
</dbReference>
<dbReference type="GO" id="GO:0046982">
    <property type="term" value="F:protein heterodimerization activity"/>
    <property type="evidence" value="ECO:0007669"/>
    <property type="project" value="InterPro"/>
</dbReference>
<dbReference type="GO" id="GO:0030527">
    <property type="term" value="F:structural constituent of chromatin"/>
    <property type="evidence" value="ECO:0007669"/>
    <property type="project" value="InterPro"/>
</dbReference>
<dbReference type="CDD" id="cd22911">
    <property type="entry name" value="HFD_H3"/>
    <property type="match status" value="1"/>
</dbReference>
<dbReference type="FunFam" id="1.10.20.10:FF:000001">
    <property type="entry name" value="Histone H3"/>
    <property type="match status" value="1"/>
</dbReference>
<dbReference type="Gene3D" id="1.10.20.10">
    <property type="entry name" value="Histone, subunit A"/>
    <property type="match status" value="1"/>
</dbReference>
<dbReference type="InterPro" id="IPR009072">
    <property type="entry name" value="Histone-fold"/>
</dbReference>
<dbReference type="InterPro" id="IPR007125">
    <property type="entry name" value="Histone_H2A/H2B/H3"/>
</dbReference>
<dbReference type="InterPro" id="IPR000164">
    <property type="entry name" value="Histone_H3/CENP-A"/>
</dbReference>
<dbReference type="PANTHER" id="PTHR11426">
    <property type="entry name" value="HISTONE H3"/>
    <property type="match status" value="1"/>
</dbReference>
<dbReference type="Pfam" id="PF00125">
    <property type="entry name" value="Histone"/>
    <property type="match status" value="1"/>
</dbReference>
<dbReference type="PRINTS" id="PR00622">
    <property type="entry name" value="HISTONEH3"/>
</dbReference>
<dbReference type="SMART" id="SM00428">
    <property type="entry name" value="H3"/>
    <property type="match status" value="1"/>
</dbReference>
<dbReference type="SUPFAM" id="SSF47113">
    <property type="entry name" value="Histone-fold"/>
    <property type="match status" value="1"/>
</dbReference>
<dbReference type="PROSITE" id="PS00959">
    <property type="entry name" value="HISTONE_H3_2"/>
    <property type="match status" value="1"/>
</dbReference>
<feature type="chain" id="PRO_0000221324" description="Histone H3-4">
    <location>
        <begin position="1" status="less than"/>
        <end position="112" status="greater than"/>
    </location>
</feature>
<feature type="region of interest" description="Disordered" evidence="2">
    <location>
        <begin position="1"/>
        <end position="31"/>
    </location>
</feature>
<feature type="non-terminal residue">
    <location>
        <position position="1"/>
    </location>
</feature>
<feature type="non-terminal residue">
    <location>
        <position position="112"/>
    </location>
</feature>
<reference key="1">
    <citation type="journal article" date="1999" name="FEMS Microbiol. Lett.">
        <title>Several highly divergent histone H3 genes are present in the hypotrichous ciliate Stylonychia lemnae.</title>
        <authorList>
            <person name="Bernhard D."/>
        </authorList>
    </citation>
    <scope>NUCLEOTIDE SEQUENCE [GENOMIC DNA]</scope>
</reference>
<sequence length="112" mass="12378">QTGAKAPRKALANKAARKTAPADGGVKKPHRFRPGTVALREIRKYQKSTELLIRKLPFQRLVREIASDYKSDLRFQSSAVAAIQEAAEAYMVGLFEDTNLCAIHAGRVTIMP</sequence>
<organism>
    <name type="scientific">Stylonychia lemnae</name>
    <name type="common">Ciliate</name>
    <dbReference type="NCBI Taxonomy" id="5949"/>
    <lineage>
        <taxon>Eukaryota</taxon>
        <taxon>Sar</taxon>
        <taxon>Alveolata</taxon>
        <taxon>Ciliophora</taxon>
        <taxon>Intramacronucleata</taxon>
        <taxon>Spirotrichea</taxon>
        <taxon>Stichotrichia</taxon>
        <taxon>Sporadotrichida</taxon>
        <taxon>Oxytrichidae</taxon>
        <taxon>Stylonychinae</taxon>
        <taxon>Stylonychia</taxon>
    </lineage>
</organism>
<name>H34_STYLE</name>
<keyword id="KW-0158">Chromosome</keyword>
<keyword id="KW-0238">DNA-binding</keyword>
<keyword id="KW-0544">Nucleosome core</keyword>
<keyword id="KW-0539">Nucleus</keyword>